<gene>
    <name type="primary">rpl22</name>
</gene>
<proteinExistence type="inferred from homology"/>
<geneLocation type="chloroplast"/>
<name>RK22_POPAL</name>
<feature type="chain" id="PRO_0000276449" description="Large ribosomal subunit protein uL22c">
    <location>
        <begin position="1"/>
        <end position="132"/>
    </location>
</feature>
<evidence type="ECO:0000250" key="1"/>
<evidence type="ECO:0000305" key="2"/>
<sequence>MIKKRKKNPYEASASGFYISMSAHKARRIIDQIRGRSYEETLMILELMPYRACYPIFKLVYSAAANASHNMGLNEASLVISKAEVNEGATMKKFKPRARGRSYLIKRPTCHISIVLEDISYEEYEEDFLRRI</sequence>
<accession>Q14FB8</accession>
<dbReference type="EMBL" id="AP008956">
    <property type="protein sequence ID" value="BAE97244.1"/>
    <property type="molecule type" value="Genomic_DNA"/>
</dbReference>
<dbReference type="RefSeq" id="YP_665597.1">
    <property type="nucleotide sequence ID" value="NC_008235.1"/>
</dbReference>
<dbReference type="SMR" id="Q14FB8"/>
<dbReference type="GeneID" id="4178248"/>
<dbReference type="KEGG" id="palz:4178248"/>
<dbReference type="OrthoDB" id="15462at3646"/>
<dbReference type="GO" id="GO:0009507">
    <property type="term" value="C:chloroplast"/>
    <property type="evidence" value="ECO:0007669"/>
    <property type="project" value="UniProtKB-SubCell"/>
</dbReference>
<dbReference type="GO" id="GO:0015934">
    <property type="term" value="C:large ribosomal subunit"/>
    <property type="evidence" value="ECO:0007669"/>
    <property type="project" value="InterPro"/>
</dbReference>
<dbReference type="GO" id="GO:0019843">
    <property type="term" value="F:rRNA binding"/>
    <property type="evidence" value="ECO:0007669"/>
    <property type="project" value="UniProtKB-UniRule"/>
</dbReference>
<dbReference type="GO" id="GO:0003735">
    <property type="term" value="F:structural constituent of ribosome"/>
    <property type="evidence" value="ECO:0007669"/>
    <property type="project" value="InterPro"/>
</dbReference>
<dbReference type="GO" id="GO:0006412">
    <property type="term" value="P:translation"/>
    <property type="evidence" value="ECO:0007669"/>
    <property type="project" value="UniProtKB-UniRule"/>
</dbReference>
<dbReference type="CDD" id="cd00336">
    <property type="entry name" value="Ribosomal_L22"/>
    <property type="match status" value="1"/>
</dbReference>
<dbReference type="FunFam" id="3.90.470.10:FF:000006">
    <property type="entry name" value="50S ribosomal protein L22, chloroplastic"/>
    <property type="match status" value="1"/>
</dbReference>
<dbReference type="Gene3D" id="3.90.470.10">
    <property type="entry name" value="Ribosomal protein L22/L17"/>
    <property type="match status" value="1"/>
</dbReference>
<dbReference type="HAMAP" id="MF_01331_B">
    <property type="entry name" value="Ribosomal_uL22_B"/>
    <property type="match status" value="1"/>
</dbReference>
<dbReference type="InterPro" id="IPR001063">
    <property type="entry name" value="Ribosomal_uL22"/>
</dbReference>
<dbReference type="InterPro" id="IPR005727">
    <property type="entry name" value="Ribosomal_uL22_bac/chlpt-type"/>
</dbReference>
<dbReference type="InterPro" id="IPR047867">
    <property type="entry name" value="Ribosomal_uL22_bac/org-type"/>
</dbReference>
<dbReference type="InterPro" id="IPR018260">
    <property type="entry name" value="Ribosomal_uL22_CS"/>
</dbReference>
<dbReference type="InterPro" id="IPR036394">
    <property type="entry name" value="Ribosomal_uL22_sf"/>
</dbReference>
<dbReference type="NCBIfam" id="TIGR01044">
    <property type="entry name" value="rplV_bact"/>
    <property type="match status" value="1"/>
</dbReference>
<dbReference type="PANTHER" id="PTHR13501">
    <property type="entry name" value="CHLOROPLAST 50S RIBOSOMAL PROTEIN L22-RELATED"/>
    <property type="match status" value="1"/>
</dbReference>
<dbReference type="PANTHER" id="PTHR13501:SF10">
    <property type="entry name" value="LARGE RIBOSOMAL SUBUNIT PROTEIN UL22M"/>
    <property type="match status" value="1"/>
</dbReference>
<dbReference type="Pfam" id="PF00237">
    <property type="entry name" value="Ribosomal_L22"/>
    <property type="match status" value="1"/>
</dbReference>
<dbReference type="SUPFAM" id="SSF54843">
    <property type="entry name" value="Ribosomal protein L22"/>
    <property type="match status" value="1"/>
</dbReference>
<dbReference type="PROSITE" id="PS00464">
    <property type="entry name" value="RIBOSOMAL_L22"/>
    <property type="match status" value="1"/>
</dbReference>
<reference key="1">
    <citation type="submission" date="2005-03" db="EMBL/GenBank/DDBJ databases">
        <title>Complete structure of the chloroplast genome of Populus alba.</title>
        <authorList>
            <person name="Okumura S."/>
            <person name="Yamashita A."/>
            <person name="Kanamoto H."/>
            <person name="Hattori M."/>
            <person name="Takase H."/>
            <person name="Tomizawa K."/>
        </authorList>
    </citation>
    <scope>NUCLEOTIDE SEQUENCE [LARGE SCALE GENOMIC DNA]</scope>
</reference>
<organism>
    <name type="scientific">Populus alba</name>
    <name type="common">White poplar</name>
    <dbReference type="NCBI Taxonomy" id="43335"/>
    <lineage>
        <taxon>Eukaryota</taxon>
        <taxon>Viridiplantae</taxon>
        <taxon>Streptophyta</taxon>
        <taxon>Embryophyta</taxon>
        <taxon>Tracheophyta</taxon>
        <taxon>Spermatophyta</taxon>
        <taxon>Magnoliopsida</taxon>
        <taxon>eudicotyledons</taxon>
        <taxon>Gunneridae</taxon>
        <taxon>Pentapetalae</taxon>
        <taxon>rosids</taxon>
        <taxon>fabids</taxon>
        <taxon>Malpighiales</taxon>
        <taxon>Salicaceae</taxon>
        <taxon>Saliceae</taxon>
        <taxon>Populus</taxon>
    </lineage>
</organism>
<comment type="function">
    <text evidence="1">This protein binds specifically to 23S rRNA.</text>
</comment>
<comment type="function">
    <text evidence="1">The globular domain of the protein is located near the polypeptide exit tunnel on the outside of the subunit, while an extended beta-hairpin is found that lines the wall of the exit tunnel in the center of the 70S ribosome.</text>
</comment>
<comment type="subunit">
    <text evidence="1">Part of the 50S ribosomal subunit.</text>
</comment>
<comment type="subcellular location">
    <subcellularLocation>
        <location>Plastid</location>
        <location>Chloroplast</location>
    </subcellularLocation>
</comment>
<comment type="similarity">
    <text evidence="2">Belongs to the universal ribosomal protein uL22 family.</text>
</comment>
<protein>
    <recommendedName>
        <fullName evidence="2">Large ribosomal subunit protein uL22c</fullName>
    </recommendedName>
    <alternativeName>
        <fullName>50S ribosomal protein L22, chloroplastic</fullName>
    </alternativeName>
</protein>
<keyword id="KW-0150">Chloroplast</keyword>
<keyword id="KW-0934">Plastid</keyword>
<keyword id="KW-0687">Ribonucleoprotein</keyword>
<keyword id="KW-0689">Ribosomal protein</keyword>
<keyword id="KW-0694">RNA-binding</keyword>
<keyword id="KW-0699">rRNA-binding</keyword>